<name>MFNA_METM5</name>
<accession>A4G060</accession>
<sequence>MEEQDILNELRKYRSQDLKYEEGYILGSMCTKPHPIARKISEMFFETNLGDPGLFNGTSKLEKEVVSMLGSILHNNNAFGYIISGGTEANLTAMRAFKNISKSKDKKQNIIIPETAHFSFDKARDMMDLNVVRPPLTEYFTMDVKFIRDYVEDSKNEISGIVGIAGCTELGSIDNIYELSKIAVENDILLHVDAAFGGFVIPFLDDKYKLKGYNYDFDFSLNGVSSITIDPHKMGLAPISAGGILFRDNTFKKYLDVDAPYLTEKQQATLIGTRSGVGVASTWGIMKLLGIEGYENLVNESMEKTKHLVKKAREYGFETAIDPVMNIVALKDENKQDTCMKLREENWYVSVCRCVEALRIVVMPHLEIEHIDGFLESLSNTKKY</sequence>
<gene>
    <name evidence="1" type="primary">mfnA</name>
    <name type="ordered locus">MmarC5_1547</name>
</gene>
<reference key="1">
    <citation type="submission" date="2007-03" db="EMBL/GenBank/DDBJ databases">
        <title>Complete sequence of chromosome of Methanococcus maripaludis C5.</title>
        <authorList>
            <consortium name="US DOE Joint Genome Institute"/>
            <person name="Copeland A."/>
            <person name="Lucas S."/>
            <person name="Lapidus A."/>
            <person name="Barry K."/>
            <person name="Glavina del Rio T."/>
            <person name="Dalin E."/>
            <person name="Tice H."/>
            <person name="Pitluck S."/>
            <person name="Chertkov O."/>
            <person name="Brettin T."/>
            <person name="Bruce D."/>
            <person name="Han C."/>
            <person name="Detter J.C."/>
            <person name="Schmutz J."/>
            <person name="Larimer F."/>
            <person name="Land M."/>
            <person name="Hauser L."/>
            <person name="Kyrpides N."/>
            <person name="Mikhailova N."/>
            <person name="Sieprawska-Lupa M."/>
            <person name="Whitman W.B."/>
            <person name="Richardson P."/>
        </authorList>
    </citation>
    <scope>NUCLEOTIDE SEQUENCE [LARGE SCALE GENOMIC DNA]</scope>
    <source>
        <strain>C5 / ATCC BAA-1333</strain>
    </source>
</reference>
<evidence type="ECO:0000255" key="1">
    <source>
        <dbReference type="HAMAP-Rule" id="MF_01610"/>
    </source>
</evidence>
<feature type="chain" id="PRO_1000069444" description="Probable L-tyrosine/L-aspartate decarboxylase">
    <location>
        <begin position="1"/>
        <end position="384"/>
    </location>
</feature>
<feature type="modified residue" description="N6-(pyridoxal phosphate)lysine" evidence="1">
    <location>
        <position position="233"/>
    </location>
</feature>
<dbReference type="EC" id="4.1.1.11" evidence="1"/>
<dbReference type="EC" id="4.1.1.25" evidence="1"/>
<dbReference type="EMBL" id="CP000609">
    <property type="protein sequence ID" value="ABO35844.1"/>
    <property type="molecule type" value="Genomic_DNA"/>
</dbReference>
<dbReference type="RefSeq" id="WP_011869291.1">
    <property type="nucleotide sequence ID" value="NC_009135.1"/>
</dbReference>
<dbReference type="SMR" id="A4G060"/>
<dbReference type="STRING" id="402880.MmarC5_1547"/>
<dbReference type="GeneID" id="4929048"/>
<dbReference type="KEGG" id="mmq:MmarC5_1547"/>
<dbReference type="eggNOG" id="arCOG00027">
    <property type="taxonomic scope" value="Archaea"/>
</dbReference>
<dbReference type="HOGENOM" id="CLU_028929_2_1_2"/>
<dbReference type="OrthoDB" id="56891at2157"/>
<dbReference type="UniPathway" id="UPA00080"/>
<dbReference type="UniPathway" id="UPA00241"/>
<dbReference type="Proteomes" id="UP000000253">
    <property type="component" value="Chromosome"/>
</dbReference>
<dbReference type="GO" id="GO:0004068">
    <property type="term" value="F:aspartate 1-decarboxylase activity"/>
    <property type="evidence" value="ECO:0007669"/>
    <property type="project" value="UniProtKB-UniRule"/>
</dbReference>
<dbReference type="GO" id="GO:0030170">
    <property type="term" value="F:pyridoxal phosphate binding"/>
    <property type="evidence" value="ECO:0007669"/>
    <property type="project" value="UniProtKB-UniRule"/>
</dbReference>
<dbReference type="GO" id="GO:0004837">
    <property type="term" value="F:tyrosine decarboxylase activity"/>
    <property type="evidence" value="ECO:0007669"/>
    <property type="project" value="UniProtKB-UniRule"/>
</dbReference>
<dbReference type="GO" id="GO:0019752">
    <property type="term" value="P:carboxylic acid metabolic process"/>
    <property type="evidence" value="ECO:0007669"/>
    <property type="project" value="InterPro"/>
</dbReference>
<dbReference type="GO" id="GO:0015937">
    <property type="term" value="P:coenzyme A biosynthetic process"/>
    <property type="evidence" value="ECO:0007669"/>
    <property type="project" value="UniProtKB-UniRule"/>
</dbReference>
<dbReference type="GO" id="GO:2001120">
    <property type="term" value="P:methanofuran biosynthetic process"/>
    <property type="evidence" value="ECO:0007669"/>
    <property type="project" value="UniProtKB-UniRule"/>
</dbReference>
<dbReference type="Gene3D" id="3.90.1150.10">
    <property type="entry name" value="Aspartate Aminotransferase, domain 1"/>
    <property type="match status" value="1"/>
</dbReference>
<dbReference type="Gene3D" id="3.40.640.10">
    <property type="entry name" value="Type I PLP-dependent aspartate aminotransferase-like (Major domain)"/>
    <property type="match status" value="1"/>
</dbReference>
<dbReference type="HAMAP" id="MF_01610">
    <property type="entry name" value="MfnA_decarbox"/>
    <property type="match status" value="1"/>
</dbReference>
<dbReference type="InterPro" id="IPR050477">
    <property type="entry name" value="GrpII_AminoAcid_Decarb"/>
</dbReference>
<dbReference type="InterPro" id="IPR020931">
    <property type="entry name" value="MfnA"/>
</dbReference>
<dbReference type="InterPro" id="IPR002129">
    <property type="entry name" value="PyrdxlP-dep_de-COase"/>
</dbReference>
<dbReference type="InterPro" id="IPR015424">
    <property type="entry name" value="PyrdxlP-dep_Trfase"/>
</dbReference>
<dbReference type="InterPro" id="IPR015421">
    <property type="entry name" value="PyrdxlP-dep_Trfase_major"/>
</dbReference>
<dbReference type="InterPro" id="IPR015422">
    <property type="entry name" value="PyrdxlP-dep_Trfase_small"/>
</dbReference>
<dbReference type="InterPro" id="IPR021115">
    <property type="entry name" value="Pyridoxal-P_BS"/>
</dbReference>
<dbReference type="NCBIfam" id="TIGR03812">
    <property type="entry name" value="tyr_de_CO2_Arch"/>
    <property type="match status" value="1"/>
</dbReference>
<dbReference type="PANTHER" id="PTHR42735">
    <property type="match status" value="1"/>
</dbReference>
<dbReference type="PANTHER" id="PTHR42735:SF6">
    <property type="entry name" value="SPHINGOSINE-1-PHOSPHATE LYASE 1"/>
    <property type="match status" value="1"/>
</dbReference>
<dbReference type="Pfam" id="PF00282">
    <property type="entry name" value="Pyridoxal_deC"/>
    <property type="match status" value="1"/>
</dbReference>
<dbReference type="SUPFAM" id="SSF53383">
    <property type="entry name" value="PLP-dependent transferases"/>
    <property type="match status" value="1"/>
</dbReference>
<dbReference type="PROSITE" id="PS00392">
    <property type="entry name" value="DDC_GAD_HDC_YDC"/>
    <property type="match status" value="1"/>
</dbReference>
<keyword id="KW-0210">Decarboxylase</keyword>
<keyword id="KW-0456">Lyase</keyword>
<keyword id="KW-0663">Pyridoxal phosphate</keyword>
<organism>
    <name type="scientific">Methanococcus maripaludis (strain C5 / ATCC BAA-1333)</name>
    <dbReference type="NCBI Taxonomy" id="402880"/>
    <lineage>
        <taxon>Archaea</taxon>
        <taxon>Methanobacteriati</taxon>
        <taxon>Methanobacteriota</taxon>
        <taxon>Methanomada group</taxon>
        <taxon>Methanococci</taxon>
        <taxon>Methanococcales</taxon>
        <taxon>Methanococcaceae</taxon>
        <taxon>Methanococcus</taxon>
    </lineage>
</organism>
<protein>
    <recommendedName>
        <fullName evidence="1">Probable L-tyrosine/L-aspartate decarboxylase</fullName>
        <shortName evidence="1">TDC/ADC</shortName>
        <ecNumber evidence="1">4.1.1.11</ecNumber>
        <ecNumber evidence="1">4.1.1.25</ecNumber>
    </recommendedName>
</protein>
<proteinExistence type="inferred from homology"/>
<comment type="function">
    <text evidence="1">Catalyzes the decarboxylation of L-tyrosine to produce tyramine for methanofuran biosynthesis. Can also catalyze the decarboxylation of L-aspartate to produce beta-alanine for coenzyme A (CoA) biosynthesis.</text>
</comment>
<comment type="catalytic activity">
    <reaction evidence="1">
        <text>L-tyrosine + H(+) = tyramine + CO2</text>
        <dbReference type="Rhea" id="RHEA:14345"/>
        <dbReference type="ChEBI" id="CHEBI:15378"/>
        <dbReference type="ChEBI" id="CHEBI:16526"/>
        <dbReference type="ChEBI" id="CHEBI:58315"/>
        <dbReference type="ChEBI" id="CHEBI:327995"/>
        <dbReference type="EC" id="4.1.1.25"/>
    </reaction>
</comment>
<comment type="catalytic activity">
    <reaction evidence="1">
        <text>L-aspartate + H(+) = beta-alanine + CO2</text>
        <dbReference type="Rhea" id="RHEA:19497"/>
        <dbReference type="ChEBI" id="CHEBI:15378"/>
        <dbReference type="ChEBI" id="CHEBI:16526"/>
        <dbReference type="ChEBI" id="CHEBI:29991"/>
        <dbReference type="ChEBI" id="CHEBI:57966"/>
        <dbReference type="EC" id="4.1.1.11"/>
    </reaction>
</comment>
<comment type="cofactor">
    <cofactor evidence="1">
        <name>pyridoxal 5'-phosphate</name>
        <dbReference type="ChEBI" id="CHEBI:597326"/>
    </cofactor>
</comment>
<comment type="pathway">
    <text evidence="1">Cofactor biosynthesis; methanofuran biosynthesis.</text>
</comment>
<comment type="pathway">
    <text evidence="1">Cofactor biosynthesis; coenzyme A biosynthesis.</text>
</comment>
<comment type="similarity">
    <text evidence="1">Belongs to the group II decarboxylase family. MfnA subfamily.</text>
</comment>